<gene>
    <name type="primary">NREP</name>
</gene>
<feature type="chain" id="PRO_0000057936" description="Neuronal regeneration-related protein">
    <location>
        <begin position="1"/>
        <end position="68"/>
    </location>
</feature>
<accession>Q90667</accession>
<protein>
    <recommendedName>
        <fullName>Neuronal regeneration-related protein</fullName>
    </recommendedName>
    <alternativeName>
        <fullName>Neuronal protein 3.1</fullName>
    </alternativeName>
    <alternativeName>
        <fullName>Protein p311</fullName>
    </alternativeName>
</protein>
<organism>
    <name type="scientific">Gallus gallus</name>
    <name type="common">Chicken</name>
    <dbReference type="NCBI Taxonomy" id="9031"/>
    <lineage>
        <taxon>Eukaryota</taxon>
        <taxon>Metazoa</taxon>
        <taxon>Chordata</taxon>
        <taxon>Craniata</taxon>
        <taxon>Vertebrata</taxon>
        <taxon>Euteleostomi</taxon>
        <taxon>Archelosauria</taxon>
        <taxon>Archosauria</taxon>
        <taxon>Dinosauria</taxon>
        <taxon>Saurischia</taxon>
        <taxon>Theropoda</taxon>
        <taxon>Coelurosauria</taxon>
        <taxon>Aves</taxon>
        <taxon>Neognathae</taxon>
        <taxon>Galloanserae</taxon>
        <taxon>Galliformes</taxon>
        <taxon>Phasianidae</taxon>
        <taxon>Phasianinae</taxon>
        <taxon>Gallus</taxon>
    </lineage>
</organism>
<dbReference type="EMBL" id="U30520">
    <property type="protein sequence ID" value="AAA74902.1"/>
    <property type="molecule type" value="mRNA"/>
</dbReference>
<dbReference type="RefSeq" id="NP_001383966.1">
    <property type="nucleotide sequence ID" value="NM_001397037.1"/>
</dbReference>
<dbReference type="RefSeq" id="NP_001383967.1">
    <property type="nucleotide sequence ID" value="NM_001397038.1"/>
</dbReference>
<dbReference type="RefSeq" id="NP_001383968.1">
    <property type="nucleotide sequence ID" value="NM_001397039.1"/>
</dbReference>
<dbReference type="RefSeq" id="NP_001383969.1">
    <property type="nucleotide sequence ID" value="NM_001397040.1"/>
</dbReference>
<dbReference type="RefSeq" id="NP_001383970.1">
    <property type="nucleotide sequence ID" value="NM_001397041.1"/>
</dbReference>
<dbReference type="RefSeq" id="NP_001383971.1">
    <property type="nucleotide sequence ID" value="NM_001397042.1"/>
</dbReference>
<dbReference type="RefSeq" id="NP_990722.1">
    <property type="nucleotide sequence ID" value="NM_205391.2"/>
</dbReference>
<dbReference type="FunCoup" id="Q90667">
    <property type="interactions" value="134"/>
</dbReference>
<dbReference type="STRING" id="9031.ENSGALP00000042546"/>
<dbReference type="PaxDb" id="9031-ENSGALP00000042546"/>
<dbReference type="Ensembl" id="ENSGALT00010019527.1">
    <property type="protein sequence ID" value="ENSGALP00010011075.1"/>
    <property type="gene ID" value="ENSGALG00010008177.1"/>
</dbReference>
<dbReference type="GeneID" id="396353"/>
<dbReference type="KEGG" id="gga:396353"/>
<dbReference type="CTD" id="9315"/>
<dbReference type="VEuPathDB" id="HostDB:geneid_396353"/>
<dbReference type="eggNOG" id="ENOG502SFKT">
    <property type="taxonomic scope" value="Eukaryota"/>
</dbReference>
<dbReference type="GeneTree" id="ENSGT00390000016521"/>
<dbReference type="InParanoid" id="Q90667"/>
<dbReference type="OMA" id="PRSTIWV"/>
<dbReference type="OrthoDB" id="9383199at2759"/>
<dbReference type="PhylomeDB" id="Q90667"/>
<dbReference type="PRO" id="PR:Q90667"/>
<dbReference type="Proteomes" id="UP000000539">
    <property type="component" value="Chromosome Z"/>
</dbReference>
<dbReference type="GO" id="GO:0031103">
    <property type="term" value="P:axon regeneration"/>
    <property type="evidence" value="ECO:0000318"/>
    <property type="project" value="GO_Central"/>
</dbReference>
<dbReference type="GO" id="GO:0045664">
    <property type="term" value="P:regulation of neuron differentiation"/>
    <property type="evidence" value="ECO:0000318"/>
    <property type="project" value="GO_Central"/>
</dbReference>
<dbReference type="GO" id="GO:0017015">
    <property type="term" value="P:regulation of transforming growth factor beta receptor signaling pathway"/>
    <property type="evidence" value="ECO:0000318"/>
    <property type="project" value="GO_Central"/>
</dbReference>
<dbReference type="InterPro" id="IPR024417">
    <property type="entry name" value="Neuronal_3.1"/>
</dbReference>
<dbReference type="PANTHER" id="PTHR17102">
    <property type="entry name" value="NEURONAL REGENERATION-RELATED PROTEIN"/>
    <property type="match status" value="1"/>
</dbReference>
<dbReference type="PANTHER" id="PTHR17102:SF4">
    <property type="entry name" value="NEURONAL REGENERATION-RELATED PROTEIN"/>
    <property type="match status" value="1"/>
</dbReference>
<dbReference type="Pfam" id="PF11092">
    <property type="entry name" value="Alveol-reg_P311"/>
    <property type="match status" value="1"/>
</dbReference>
<reference key="1">
    <citation type="submission" date="1995-06" db="EMBL/GenBank/DDBJ databases">
        <authorList>
            <person name="Studler J.-M."/>
        </authorList>
    </citation>
    <scope>NUCLEOTIDE SEQUENCE [MRNA]</scope>
    <source>
        <tissue>Cerebellum</tissue>
    </source>
</reference>
<keyword id="KW-1185">Reference proteome</keyword>
<proteinExistence type="predicted"/>
<sequence>MIYQPRQTIWVSQKVFPTSQGDGGFLKGCLPISKEVNRKKESEVEGACWAPVNGDGHHFTKINYLYTF</sequence>
<name>NREP_CHICK</name>